<dbReference type="EC" id="2.9.1.3" evidence="1"/>
<dbReference type="EMBL" id="CP000247">
    <property type="protein sequence ID" value="ABG68593.1"/>
    <property type="molecule type" value="Genomic_DNA"/>
</dbReference>
<dbReference type="SMR" id="Q0TKD8"/>
<dbReference type="KEGG" id="ecp:ECP_0564"/>
<dbReference type="HOGENOM" id="CLU_043456_1_0_6"/>
<dbReference type="Proteomes" id="UP000009182">
    <property type="component" value="Chromosome"/>
</dbReference>
<dbReference type="GO" id="GO:0016765">
    <property type="term" value="F:transferase activity, transferring alkyl or aryl (other than methyl) groups"/>
    <property type="evidence" value="ECO:0007669"/>
    <property type="project" value="UniProtKB-UniRule"/>
</dbReference>
<dbReference type="GO" id="GO:0043828">
    <property type="term" value="F:tRNA 2-selenouridine synthase activity"/>
    <property type="evidence" value="ECO:0007669"/>
    <property type="project" value="UniProtKB-EC"/>
</dbReference>
<dbReference type="GO" id="GO:0002098">
    <property type="term" value="P:tRNA wobble uridine modification"/>
    <property type="evidence" value="ECO:0007669"/>
    <property type="project" value="UniProtKB-UniRule"/>
</dbReference>
<dbReference type="CDD" id="cd01520">
    <property type="entry name" value="RHOD_YbbB"/>
    <property type="match status" value="1"/>
</dbReference>
<dbReference type="FunFam" id="3.40.250.10:FF:000009">
    <property type="entry name" value="tRNA 2-selenouridine/geranyl-2-thiouridine synthase"/>
    <property type="match status" value="1"/>
</dbReference>
<dbReference type="Gene3D" id="3.40.250.10">
    <property type="entry name" value="Rhodanese-like domain"/>
    <property type="match status" value="1"/>
</dbReference>
<dbReference type="HAMAP" id="MF_01622">
    <property type="entry name" value="tRNA_sel_U_synth"/>
    <property type="match status" value="1"/>
</dbReference>
<dbReference type="InterPro" id="IPR027417">
    <property type="entry name" value="P-loop_NTPase"/>
</dbReference>
<dbReference type="InterPro" id="IPR001763">
    <property type="entry name" value="Rhodanese-like_dom"/>
</dbReference>
<dbReference type="InterPro" id="IPR036873">
    <property type="entry name" value="Rhodanese-like_dom_sf"/>
</dbReference>
<dbReference type="InterPro" id="IPR017582">
    <property type="entry name" value="SelU"/>
</dbReference>
<dbReference type="NCBIfam" id="NF008749">
    <property type="entry name" value="PRK11784.1-1"/>
    <property type="match status" value="1"/>
</dbReference>
<dbReference type="NCBIfam" id="NF008751">
    <property type="entry name" value="PRK11784.1-3"/>
    <property type="match status" value="1"/>
</dbReference>
<dbReference type="NCBIfam" id="TIGR03167">
    <property type="entry name" value="tRNA_sel_U_synt"/>
    <property type="match status" value="1"/>
</dbReference>
<dbReference type="PANTHER" id="PTHR30401">
    <property type="entry name" value="TRNA 2-SELENOURIDINE SYNTHASE"/>
    <property type="match status" value="1"/>
</dbReference>
<dbReference type="PANTHER" id="PTHR30401:SF0">
    <property type="entry name" value="TRNA 2-SELENOURIDINE SYNTHASE"/>
    <property type="match status" value="1"/>
</dbReference>
<dbReference type="SMART" id="SM00450">
    <property type="entry name" value="RHOD"/>
    <property type="match status" value="1"/>
</dbReference>
<dbReference type="SUPFAM" id="SSF52540">
    <property type="entry name" value="P-loop containing nucleoside triphosphate hydrolases"/>
    <property type="match status" value="1"/>
</dbReference>
<dbReference type="SUPFAM" id="SSF52821">
    <property type="entry name" value="Rhodanese/Cell cycle control phosphatase"/>
    <property type="match status" value="1"/>
</dbReference>
<dbReference type="PROSITE" id="PS50206">
    <property type="entry name" value="RHODANESE_3"/>
    <property type="match status" value="1"/>
</dbReference>
<sequence>MQERHTEQDYRALLIADTPIIDVRAPIEFEQGAMPAAINLPLMNNDERAAVGICYKQQGSDAALALGHKLVAGEIRQQRIDAWRAACLQNPHGILCCARGGQRSHIVQRWLHDAGIDYPLVEGGYKALRQTAIQATIELSQKPIVLIGGCTGCGKTLLVQQQPNGVDLEGLARHRGSAFGRTLQPQLSQASFENLLAAEMLKTDAHQDLRLWVLEDESRMIGSNHLPECLRERMTQATIAVVEDPFEIRLERLNEEYFLRMHHDFTHAYGDEQGWQEYCEYLHHGLSAIKRRLGLQRYNELAARLDAALTTQLTTGSTDGHLAWLVPLLEEYYDPMYRYQLEKKAEKVVFRGEWAEVAEWVKAQ</sequence>
<name>SELU_ECOL5</name>
<accession>Q0TKD8</accession>
<protein>
    <recommendedName>
        <fullName evidence="1">tRNA 2-selenouridine synthase</fullName>
        <ecNumber evidence="1">2.9.1.3</ecNumber>
    </recommendedName>
</protein>
<feature type="chain" id="PRO_0000292699" description="tRNA 2-selenouridine synthase">
    <location>
        <begin position="1"/>
        <end position="364"/>
    </location>
</feature>
<feature type="domain" description="Rhodanese" evidence="1">
    <location>
        <begin position="14"/>
        <end position="137"/>
    </location>
</feature>
<feature type="active site" description="S-selanylcysteine intermediate" evidence="1">
    <location>
        <position position="97"/>
    </location>
</feature>
<keyword id="KW-0711">Selenium</keyword>
<keyword id="KW-0808">Transferase</keyword>
<evidence type="ECO:0000255" key="1">
    <source>
        <dbReference type="HAMAP-Rule" id="MF_01622"/>
    </source>
</evidence>
<proteinExistence type="inferred from homology"/>
<reference key="1">
    <citation type="journal article" date="2006" name="Mol. Microbiol.">
        <title>Role of pathogenicity island-associated integrases in the genome plasticity of uropathogenic Escherichia coli strain 536.</title>
        <authorList>
            <person name="Hochhut B."/>
            <person name="Wilde C."/>
            <person name="Balling G."/>
            <person name="Middendorf B."/>
            <person name="Dobrindt U."/>
            <person name="Brzuszkiewicz E."/>
            <person name="Gottschalk G."/>
            <person name="Carniel E."/>
            <person name="Hacker J."/>
        </authorList>
    </citation>
    <scope>NUCLEOTIDE SEQUENCE [LARGE SCALE GENOMIC DNA]</scope>
    <source>
        <strain>536 / UPEC</strain>
    </source>
</reference>
<organism>
    <name type="scientific">Escherichia coli O6:K15:H31 (strain 536 / UPEC)</name>
    <dbReference type="NCBI Taxonomy" id="362663"/>
    <lineage>
        <taxon>Bacteria</taxon>
        <taxon>Pseudomonadati</taxon>
        <taxon>Pseudomonadota</taxon>
        <taxon>Gammaproteobacteria</taxon>
        <taxon>Enterobacterales</taxon>
        <taxon>Enterobacteriaceae</taxon>
        <taxon>Escherichia</taxon>
    </lineage>
</organism>
<gene>
    <name evidence="1" type="primary">selU</name>
    <name type="ordered locus">ECP_0564</name>
</gene>
<comment type="function">
    <text evidence="1">Involved in the post-transcriptional modification of the uridine at the wobble position (U34) of tRNA(Lys), tRNA(Glu) and tRNA(Gln). Catalyzes the conversion of 2-thiouridine (S2U-RNA) to 2-selenouridine (Se2U-RNA). Acts in a two-step process involving geranylation of 2-thiouridine (S2U) to S-geranyl-2-thiouridine (geS2U) and subsequent selenation of the latter derivative to 2-selenouridine (Se2U) in the tRNA chain.</text>
</comment>
<comment type="catalytic activity">
    <reaction evidence="1">
        <text>5-methylaminomethyl-2-thiouridine(34) in tRNA + selenophosphate + (2E)-geranyl diphosphate + H2O + H(+) = 5-methylaminomethyl-2-selenouridine(34) in tRNA + (2E)-thiogeraniol + phosphate + diphosphate</text>
        <dbReference type="Rhea" id="RHEA:42716"/>
        <dbReference type="Rhea" id="RHEA-COMP:10195"/>
        <dbReference type="Rhea" id="RHEA-COMP:10196"/>
        <dbReference type="ChEBI" id="CHEBI:15377"/>
        <dbReference type="ChEBI" id="CHEBI:15378"/>
        <dbReference type="ChEBI" id="CHEBI:16144"/>
        <dbReference type="ChEBI" id="CHEBI:33019"/>
        <dbReference type="ChEBI" id="CHEBI:43474"/>
        <dbReference type="ChEBI" id="CHEBI:58057"/>
        <dbReference type="ChEBI" id="CHEBI:74455"/>
        <dbReference type="ChEBI" id="CHEBI:82743"/>
        <dbReference type="ChEBI" id="CHEBI:143703"/>
        <dbReference type="EC" id="2.9.1.3"/>
    </reaction>
    <physiologicalReaction direction="left-to-right" evidence="1">
        <dbReference type="Rhea" id="RHEA:42717"/>
    </physiologicalReaction>
</comment>
<comment type="catalytic activity">
    <reaction evidence="1">
        <text>5-methylaminomethyl-2-thiouridine(34) in tRNA + (2E)-geranyl diphosphate = 5-methylaminomethyl-S-(2E)-geranyl-thiouridine(34) in tRNA + diphosphate</text>
        <dbReference type="Rhea" id="RHEA:14085"/>
        <dbReference type="Rhea" id="RHEA-COMP:10195"/>
        <dbReference type="Rhea" id="RHEA-COMP:14654"/>
        <dbReference type="ChEBI" id="CHEBI:33019"/>
        <dbReference type="ChEBI" id="CHEBI:58057"/>
        <dbReference type="ChEBI" id="CHEBI:74455"/>
        <dbReference type="ChEBI" id="CHEBI:140632"/>
    </reaction>
    <physiologicalReaction direction="left-to-right" evidence="1">
        <dbReference type="Rhea" id="RHEA:14086"/>
    </physiologicalReaction>
</comment>
<comment type="catalytic activity">
    <reaction evidence="1">
        <text>5-methylaminomethyl-S-(2E)-geranyl-thiouridine(34) in tRNA + selenophosphate + H(+) = 5-methylaminomethyl-2-(Se-phospho)selenouridine(34) in tRNA + (2E)-thiogeraniol</text>
        <dbReference type="Rhea" id="RHEA:60172"/>
        <dbReference type="Rhea" id="RHEA-COMP:14654"/>
        <dbReference type="Rhea" id="RHEA-COMP:15523"/>
        <dbReference type="ChEBI" id="CHEBI:15378"/>
        <dbReference type="ChEBI" id="CHEBI:16144"/>
        <dbReference type="ChEBI" id="CHEBI:140632"/>
        <dbReference type="ChEBI" id="CHEBI:143702"/>
        <dbReference type="ChEBI" id="CHEBI:143703"/>
    </reaction>
    <physiologicalReaction direction="left-to-right" evidence="1">
        <dbReference type="Rhea" id="RHEA:60173"/>
    </physiologicalReaction>
</comment>
<comment type="catalytic activity">
    <reaction evidence="1">
        <text>5-methylaminomethyl-2-(Se-phospho)selenouridine(34) in tRNA + H2O = 5-methylaminomethyl-2-selenouridine(34) in tRNA + phosphate</text>
        <dbReference type="Rhea" id="RHEA:60176"/>
        <dbReference type="Rhea" id="RHEA-COMP:10196"/>
        <dbReference type="Rhea" id="RHEA-COMP:15523"/>
        <dbReference type="ChEBI" id="CHEBI:15377"/>
        <dbReference type="ChEBI" id="CHEBI:43474"/>
        <dbReference type="ChEBI" id="CHEBI:82743"/>
        <dbReference type="ChEBI" id="CHEBI:143702"/>
    </reaction>
    <physiologicalReaction direction="left-to-right" evidence="1">
        <dbReference type="Rhea" id="RHEA:60177"/>
    </physiologicalReaction>
</comment>
<comment type="subunit">
    <text evidence="1">Monomer.</text>
</comment>
<comment type="similarity">
    <text evidence="1">Belongs to the SelU family.</text>
</comment>